<sequence length="606" mass="68928">MTVLGYPRSWSCHCLPVLILLLGIGHGPWVEGVTHYKPGDPVILYVNKVGPYHNPQETYHYYQLPVCCPEKIRHKSLSLGEVLDGDRMAESLYEIRFRENVEKRILCHMQLSSAQVEQLRQAIEELYYFEFVVDDLPIRGFVGYMEESGFLPHSHKIGLWTHLDFHLEFHGDRIIFANVSVRDVKPHSLDGLRSDELLGLTHTYSVRWSETSVEHRSDRRRGDDGGFFPRTLEIHWLSIINSMVLVFLLVGFVAVILMRVLRNDLARYNLDEETSSGGSSDDFDQGDNGWKIIHTDVFRFPPYRGLLCAVLGVGAQFLALGTGIIVMALLGMFNVHRHGAINSAAILLYALTCCISGYVSSHFYRQIGGERWVWNIILTSSLFSVPFFLTWSVVNSVHWANGSTQALPATTILLLLTVWLLVGFPLTVIGGIFGKNNASPFDAPCRTKNIAREIPPQPWYKSTVIHMTVGGFLPFSAISVELYYIFATVWGREQYTLYGILFFVFAILLSVGACISIALTYFQLSGEDYRWWWRSVLSVGSTGLFIFLYSVFYYARRSNMSGAVQTVEFFGYSLLTGYVFFLMLGTISFFSSLKFIRYIYVNLKMD</sequence>
<comment type="function">
    <text evidence="1">Plays an essential role in autophagy.</text>
</comment>
<comment type="subcellular location">
    <subcellularLocation>
        <location>Lysosome membrane</location>
        <topology>Multi-pass membrane protein</topology>
    </subcellularLocation>
    <subcellularLocation>
        <location evidence="1">Cytoplasmic vesicle</location>
        <location evidence="1">Autophagosome membrane</location>
        <topology evidence="1">Multi-pass membrane protein</topology>
    </subcellularLocation>
</comment>
<comment type="similarity">
    <text evidence="3">Belongs to the nonaspanin (TM9SF) (TC 9.A.2) family.</text>
</comment>
<accession>Q9DBU0</accession>
<accession>Q3U7S4</accession>
<accession>Q8VD27</accession>
<accession>Q922J5</accession>
<accession>Q9ET29</accession>
<name>TM9S1_MOUSE</name>
<proteinExistence type="evidence at transcript level"/>
<keyword id="KW-0072">Autophagy</keyword>
<keyword id="KW-0968">Cytoplasmic vesicle</keyword>
<keyword id="KW-0325">Glycoprotein</keyword>
<keyword id="KW-0458">Lysosome</keyword>
<keyword id="KW-0472">Membrane</keyword>
<keyword id="KW-1185">Reference proteome</keyword>
<keyword id="KW-0732">Signal</keyword>
<keyword id="KW-0812">Transmembrane</keyword>
<keyword id="KW-1133">Transmembrane helix</keyword>
<evidence type="ECO:0000250" key="1"/>
<evidence type="ECO:0000255" key="2"/>
<evidence type="ECO:0000305" key="3"/>
<organism>
    <name type="scientific">Mus musculus</name>
    <name type="common">Mouse</name>
    <dbReference type="NCBI Taxonomy" id="10090"/>
    <lineage>
        <taxon>Eukaryota</taxon>
        <taxon>Metazoa</taxon>
        <taxon>Chordata</taxon>
        <taxon>Craniata</taxon>
        <taxon>Vertebrata</taxon>
        <taxon>Euteleostomi</taxon>
        <taxon>Mammalia</taxon>
        <taxon>Eutheria</taxon>
        <taxon>Euarchontoglires</taxon>
        <taxon>Glires</taxon>
        <taxon>Rodentia</taxon>
        <taxon>Myomorpha</taxon>
        <taxon>Muroidea</taxon>
        <taxon>Muridae</taxon>
        <taxon>Murinae</taxon>
        <taxon>Mus</taxon>
        <taxon>Mus</taxon>
    </lineage>
</organism>
<feature type="signal peptide" evidence="2">
    <location>
        <begin position="1"/>
        <end position="27"/>
    </location>
</feature>
<feature type="chain" id="PRO_0000034362" description="Transmembrane 9 superfamily member 1">
    <location>
        <begin position="28"/>
        <end position="606"/>
    </location>
</feature>
<feature type="transmembrane region" description="Helical" evidence="2">
    <location>
        <begin position="237"/>
        <end position="257"/>
    </location>
</feature>
<feature type="transmembrane region" description="Helical" evidence="2">
    <location>
        <begin position="310"/>
        <end position="330"/>
    </location>
</feature>
<feature type="transmembrane region" description="Helical" evidence="2">
    <location>
        <begin position="339"/>
        <end position="359"/>
    </location>
</feature>
<feature type="transmembrane region" description="Helical" evidence="2">
    <location>
        <begin position="373"/>
        <end position="393"/>
    </location>
</feature>
<feature type="transmembrane region" description="Helical" evidence="2">
    <location>
        <begin position="412"/>
        <end position="432"/>
    </location>
</feature>
<feature type="transmembrane region" description="Helical" evidence="2">
    <location>
        <begin position="469"/>
        <end position="489"/>
    </location>
</feature>
<feature type="transmembrane region" description="Helical" evidence="2">
    <location>
        <begin position="499"/>
        <end position="519"/>
    </location>
</feature>
<feature type="transmembrane region" description="Helical" evidence="2">
    <location>
        <begin position="535"/>
        <end position="555"/>
    </location>
</feature>
<feature type="transmembrane region" description="Helical" evidence="2">
    <location>
        <begin position="570"/>
        <end position="590"/>
    </location>
</feature>
<feature type="glycosylation site" description="N-linked (GlcNAc...) asparagine" evidence="2">
    <location>
        <position position="178"/>
    </location>
</feature>
<feature type="glycosylation site" description="N-linked (GlcNAc...) asparagine" evidence="2">
    <location>
        <position position="401"/>
    </location>
</feature>
<feature type="glycosylation site" description="N-linked (GlcNAc...) asparagine" evidence="2">
    <location>
        <position position="559"/>
    </location>
</feature>
<feature type="sequence conflict" description="In Ref. 1; AAF98161." evidence="3" ref="1">
    <original>VPFFLTWSVVNSVHWANGSTQALPA</original>
    <variation>EFLSVTQCGELSALGQRFNTGAAT</variation>
    <location>
        <begin position="385"/>
        <end position="409"/>
    </location>
</feature>
<gene>
    <name type="primary">Tm9sf1</name>
</gene>
<protein>
    <recommendedName>
        <fullName>Transmembrane 9 superfamily member 1</fullName>
    </recommendedName>
</protein>
<dbReference type="EMBL" id="AF269152">
    <property type="protein sequence ID" value="AAF98161.1"/>
    <property type="molecule type" value="mRNA"/>
</dbReference>
<dbReference type="EMBL" id="AK004754">
    <property type="protein sequence ID" value="BAB23535.2"/>
    <property type="molecule type" value="mRNA"/>
</dbReference>
<dbReference type="EMBL" id="AK152476">
    <property type="protein sequence ID" value="BAE31250.1"/>
    <property type="molecule type" value="mRNA"/>
</dbReference>
<dbReference type="EMBL" id="AK152540">
    <property type="protein sequence ID" value="BAE31295.1"/>
    <property type="molecule type" value="mRNA"/>
</dbReference>
<dbReference type="EMBL" id="BC007187">
    <property type="protein sequence ID" value="AAH07187.1"/>
    <property type="molecule type" value="mRNA"/>
</dbReference>
<dbReference type="EMBL" id="BC017617">
    <property type="protein sequence ID" value="AAH17617.1"/>
    <property type="molecule type" value="mRNA"/>
</dbReference>
<dbReference type="CCDS" id="CCDS27122.1"/>
<dbReference type="RefSeq" id="NP_001346992.1">
    <property type="nucleotide sequence ID" value="NM_001360063.1"/>
</dbReference>
<dbReference type="RefSeq" id="NP_083056.2">
    <property type="nucleotide sequence ID" value="NM_028780.3"/>
</dbReference>
<dbReference type="RefSeq" id="XP_017171706.1">
    <property type="nucleotide sequence ID" value="XM_017316217.1"/>
</dbReference>
<dbReference type="RefSeq" id="XP_030103911.1">
    <property type="nucleotide sequence ID" value="XM_030248051.1"/>
</dbReference>
<dbReference type="RefSeq" id="XP_030103912.1">
    <property type="nucleotide sequence ID" value="XM_030248052.2"/>
</dbReference>
<dbReference type="RefSeq" id="XP_030103913.1">
    <property type="nucleotide sequence ID" value="XM_030248053.1"/>
</dbReference>
<dbReference type="RefSeq" id="XP_030103914.1">
    <property type="nucleotide sequence ID" value="XM_030248054.2"/>
</dbReference>
<dbReference type="SMR" id="Q9DBU0"/>
<dbReference type="BioGRID" id="216520">
    <property type="interactions" value="4"/>
</dbReference>
<dbReference type="FunCoup" id="Q9DBU0">
    <property type="interactions" value="641"/>
</dbReference>
<dbReference type="STRING" id="10090.ENSMUSP00000113782"/>
<dbReference type="GlyCosmos" id="Q9DBU0">
    <property type="glycosylation" value="3 sites, No reported glycans"/>
</dbReference>
<dbReference type="GlyGen" id="Q9DBU0">
    <property type="glycosylation" value="4 sites, 2 N-linked glycans (2 sites)"/>
</dbReference>
<dbReference type="iPTMnet" id="Q9DBU0"/>
<dbReference type="PhosphoSitePlus" id="Q9DBU0"/>
<dbReference type="SwissPalm" id="Q9DBU0"/>
<dbReference type="jPOST" id="Q9DBU0"/>
<dbReference type="PaxDb" id="10090-ENSMUSP00000113782"/>
<dbReference type="ProteomicsDB" id="259233"/>
<dbReference type="Pumba" id="Q9DBU0"/>
<dbReference type="DNASU" id="74140"/>
<dbReference type="Ensembl" id="ENSMUST00000002391.15">
    <property type="protein sequence ID" value="ENSMUSP00000002391.9"/>
    <property type="gene ID" value="ENSMUSG00000002320.16"/>
</dbReference>
<dbReference type="Ensembl" id="ENSMUST00000120041.8">
    <property type="protein sequence ID" value="ENSMUSP00000112893.2"/>
    <property type="gene ID" value="ENSMUSG00000002320.16"/>
</dbReference>
<dbReference type="Ensembl" id="ENSMUST00000121791.8">
    <property type="protein sequence ID" value="ENSMUSP00000112764.2"/>
    <property type="gene ID" value="ENSMUSG00000002320.16"/>
</dbReference>
<dbReference type="Ensembl" id="ENSMUST00000122358.8">
    <property type="protein sequence ID" value="ENSMUSP00000113782.2"/>
    <property type="gene ID" value="ENSMUSG00000002320.16"/>
</dbReference>
<dbReference type="GeneID" id="74140"/>
<dbReference type="KEGG" id="mmu:74140"/>
<dbReference type="UCSC" id="uc007tzs.1">
    <property type="organism name" value="mouse"/>
</dbReference>
<dbReference type="AGR" id="MGI:1921390"/>
<dbReference type="CTD" id="10548"/>
<dbReference type="MGI" id="MGI:1921390">
    <property type="gene designation" value="Tm9sf1"/>
</dbReference>
<dbReference type="VEuPathDB" id="HostDB:ENSMUSG00000002320"/>
<dbReference type="eggNOG" id="KOG1277">
    <property type="taxonomic scope" value="Eukaryota"/>
</dbReference>
<dbReference type="GeneTree" id="ENSGT00940000158667"/>
<dbReference type="HOGENOM" id="CLU_010714_0_2_1"/>
<dbReference type="InParanoid" id="Q9DBU0"/>
<dbReference type="OMA" id="LEVHWLS"/>
<dbReference type="OrthoDB" id="1666796at2759"/>
<dbReference type="PhylomeDB" id="Q9DBU0"/>
<dbReference type="TreeFam" id="TF328663"/>
<dbReference type="BioGRID-ORCS" id="74140">
    <property type="hits" value="5 hits in 77 CRISPR screens"/>
</dbReference>
<dbReference type="ChiTaRS" id="Tm9sf1">
    <property type="organism name" value="mouse"/>
</dbReference>
<dbReference type="PRO" id="PR:Q9DBU0"/>
<dbReference type="Proteomes" id="UP000000589">
    <property type="component" value="Chromosome 14"/>
</dbReference>
<dbReference type="RNAct" id="Q9DBU0">
    <property type="molecule type" value="protein"/>
</dbReference>
<dbReference type="Bgee" id="ENSMUSG00000002320">
    <property type="expression patterns" value="Expressed in right kidney and 92 other cell types or tissues"/>
</dbReference>
<dbReference type="ExpressionAtlas" id="Q9DBU0">
    <property type="expression patterns" value="baseline and differential"/>
</dbReference>
<dbReference type="GO" id="GO:0000421">
    <property type="term" value="C:autophagosome membrane"/>
    <property type="evidence" value="ECO:0007669"/>
    <property type="project" value="UniProtKB-SubCell"/>
</dbReference>
<dbReference type="GO" id="GO:0031410">
    <property type="term" value="C:cytoplasmic vesicle"/>
    <property type="evidence" value="ECO:0007669"/>
    <property type="project" value="UniProtKB-KW"/>
</dbReference>
<dbReference type="GO" id="GO:0005765">
    <property type="term" value="C:lysosomal membrane"/>
    <property type="evidence" value="ECO:0007669"/>
    <property type="project" value="UniProtKB-SubCell"/>
</dbReference>
<dbReference type="GO" id="GO:0006914">
    <property type="term" value="P:autophagy"/>
    <property type="evidence" value="ECO:0007669"/>
    <property type="project" value="UniProtKB-KW"/>
</dbReference>
<dbReference type="InterPro" id="IPR004240">
    <property type="entry name" value="EMP70"/>
</dbReference>
<dbReference type="PANTHER" id="PTHR10766:SF177">
    <property type="entry name" value="TRANSMEMBRANE 9 SUPERFAMILY MEMBER 1"/>
    <property type="match status" value="1"/>
</dbReference>
<dbReference type="PANTHER" id="PTHR10766">
    <property type="entry name" value="TRANSMEMBRANE 9 SUPERFAMILY PROTEIN"/>
    <property type="match status" value="1"/>
</dbReference>
<dbReference type="Pfam" id="PF02990">
    <property type="entry name" value="EMP70"/>
    <property type="match status" value="1"/>
</dbReference>
<reference key="1">
    <citation type="submission" date="2000-05" db="EMBL/GenBank/DDBJ databases">
        <title>Evolution of the TM9 super family of membrane spanning proteins.</title>
        <authorList>
            <person name="Warner S.J."/>
            <person name="Lomax M.I."/>
        </authorList>
    </citation>
    <scope>NUCLEOTIDE SEQUENCE [MRNA]</scope>
</reference>
<reference key="2">
    <citation type="journal article" date="2005" name="Science">
        <title>The transcriptional landscape of the mammalian genome.</title>
        <authorList>
            <person name="Carninci P."/>
            <person name="Kasukawa T."/>
            <person name="Katayama S."/>
            <person name="Gough J."/>
            <person name="Frith M.C."/>
            <person name="Maeda N."/>
            <person name="Oyama R."/>
            <person name="Ravasi T."/>
            <person name="Lenhard B."/>
            <person name="Wells C."/>
            <person name="Kodzius R."/>
            <person name="Shimokawa K."/>
            <person name="Bajic V.B."/>
            <person name="Brenner S.E."/>
            <person name="Batalov S."/>
            <person name="Forrest A.R."/>
            <person name="Zavolan M."/>
            <person name="Davis M.J."/>
            <person name="Wilming L.G."/>
            <person name="Aidinis V."/>
            <person name="Allen J.E."/>
            <person name="Ambesi-Impiombato A."/>
            <person name="Apweiler R."/>
            <person name="Aturaliya R.N."/>
            <person name="Bailey T.L."/>
            <person name="Bansal M."/>
            <person name="Baxter L."/>
            <person name="Beisel K.W."/>
            <person name="Bersano T."/>
            <person name="Bono H."/>
            <person name="Chalk A.M."/>
            <person name="Chiu K.P."/>
            <person name="Choudhary V."/>
            <person name="Christoffels A."/>
            <person name="Clutterbuck D.R."/>
            <person name="Crowe M.L."/>
            <person name="Dalla E."/>
            <person name="Dalrymple B.P."/>
            <person name="de Bono B."/>
            <person name="Della Gatta G."/>
            <person name="di Bernardo D."/>
            <person name="Down T."/>
            <person name="Engstrom P."/>
            <person name="Fagiolini M."/>
            <person name="Faulkner G."/>
            <person name="Fletcher C.F."/>
            <person name="Fukushima T."/>
            <person name="Furuno M."/>
            <person name="Futaki S."/>
            <person name="Gariboldi M."/>
            <person name="Georgii-Hemming P."/>
            <person name="Gingeras T.R."/>
            <person name="Gojobori T."/>
            <person name="Green R.E."/>
            <person name="Gustincich S."/>
            <person name="Harbers M."/>
            <person name="Hayashi Y."/>
            <person name="Hensch T.K."/>
            <person name="Hirokawa N."/>
            <person name="Hill D."/>
            <person name="Huminiecki L."/>
            <person name="Iacono M."/>
            <person name="Ikeo K."/>
            <person name="Iwama A."/>
            <person name="Ishikawa T."/>
            <person name="Jakt M."/>
            <person name="Kanapin A."/>
            <person name="Katoh M."/>
            <person name="Kawasawa Y."/>
            <person name="Kelso J."/>
            <person name="Kitamura H."/>
            <person name="Kitano H."/>
            <person name="Kollias G."/>
            <person name="Krishnan S.P."/>
            <person name="Kruger A."/>
            <person name="Kummerfeld S.K."/>
            <person name="Kurochkin I.V."/>
            <person name="Lareau L.F."/>
            <person name="Lazarevic D."/>
            <person name="Lipovich L."/>
            <person name="Liu J."/>
            <person name="Liuni S."/>
            <person name="McWilliam S."/>
            <person name="Madan Babu M."/>
            <person name="Madera M."/>
            <person name="Marchionni L."/>
            <person name="Matsuda H."/>
            <person name="Matsuzawa S."/>
            <person name="Miki H."/>
            <person name="Mignone F."/>
            <person name="Miyake S."/>
            <person name="Morris K."/>
            <person name="Mottagui-Tabar S."/>
            <person name="Mulder N."/>
            <person name="Nakano N."/>
            <person name="Nakauchi H."/>
            <person name="Ng P."/>
            <person name="Nilsson R."/>
            <person name="Nishiguchi S."/>
            <person name="Nishikawa S."/>
            <person name="Nori F."/>
            <person name="Ohara O."/>
            <person name="Okazaki Y."/>
            <person name="Orlando V."/>
            <person name="Pang K.C."/>
            <person name="Pavan W.J."/>
            <person name="Pavesi G."/>
            <person name="Pesole G."/>
            <person name="Petrovsky N."/>
            <person name="Piazza S."/>
            <person name="Reed J."/>
            <person name="Reid J.F."/>
            <person name="Ring B.Z."/>
            <person name="Ringwald M."/>
            <person name="Rost B."/>
            <person name="Ruan Y."/>
            <person name="Salzberg S.L."/>
            <person name="Sandelin A."/>
            <person name="Schneider C."/>
            <person name="Schoenbach C."/>
            <person name="Sekiguchi K."/>
            <person name="Semple C.A."/>
            <person name="Seno S."/>
            <person name="Sessa L."/>
            <person name="Sheng Y."/>
            <person name="Shibata Y."/>
            <person name="Shimada H."/>
            <person name="Shimada K."/>
            <person name="Silva D."/>
            <person name="Sinclair B."/>
            <person name="Sperling S."/>
            <person name="Stupka E."/>
            <person name="Sugiura K."/>
            <person name="Sultana R."/>
            <person name="Takenaka Y."/>
            <person name="Taki K."/>
            <person name="Tammoja K."/>
            <person name="Tan S.L."/>
            <person name="Tang S."/>
            <person name="Taylor M.S."/>
            <person name="Tegner J."/>
            <person name="Teichmann S.A."/>
            <person name="Ueda H.R."/>
            <person name="van Nimwegen E."/>
            <person name="Verardo R."/>
            <person name="Wei C.L."/>
            <person name="Yagi K."/>
            <person name="Yamanishi H."/>
            <person name="Zabarovsky E."/>
            <person name="Zhu S."/>
            <person name="Zimmer A."/>
            <person name="Hide W."/>
            <person name="Bult C."/>
            <person name="Grimmond S.M."/>
            <person name="Teasdale R.D."/>
            <person name="Liu E.T."/>
            <person name="Brusic V."/>
            <person name="Quackenbush J."/>
            <person name="Wahlestedt C."/>
            <person name="Mattick J.S."/>
            <person name="Hume D.A."/>
            <person name="Kai C."/>
            <person name="Sasaki D."/>
            <person name="Tomaru Y."/>
            <person name="Fukuda S."/>
            <person name="Kanamori-Katayama M."/>
            <person name="Suzuki M."/>
            <person name="Aoki J."/>
            <person name="Arakawa T."/>
            <person name="Iida J."/>
            <person name="Imamura K."/>
            <person name="Itoh M."/>
            <person name="Kato T."/>
            <person name="Kawaji H."/>
            <person name="Kawagashira N."/>
            <person name="Kawashima T."/>
            <person name="Kojima M."/>
            <person name="Kondo S."/>
            <person name="Konno H."/>
            <person name="Nakano K."/>
            <person name="Ninomiya N."/>
            <person name="Nishio T."/>
            <person name="Okada M."/>
            <person name="Plessy C."/>
            <person name="Shibata K."/>
            <person name="Shiraki T."/>
            <person name="Suzuki S."/>
            <person name="Tagami M."/>
            <person name="Waki K."/>
            <person name="Watahiki A."/>
            <person name="Okamura-Oho Y."/>
            <person name="Suzuki H."/>
            <person name="Kawai J."/>
            <person name="Hayashizaki Y."/>
        </authorList>
    </citation>
    <scope>NUCLEOTIDE SEQUENCE [LARGE SCALE MRNA]</scope>
    <source>
        <strain>C57BL/6J</strain>
        <tissue>Bone marrow</tissue>
        <tissue>Lung</tissue>
    </source>
</reference>
<reference key="3">
    <citation type="journal article" date="2004" name="Genome Res.">
        <title>The status, quality, and expansion of the NIH full-length cDNA project: the Mammalian Gene Collection (MGC).</title>
        <authorList>
            <consortium name="The MGC Project Team"/>
        </authorList>
    </citation>
    <scope>NUCLEOTIDE SEQUENCE [LARGE SCALE MRNA]</scope>
    <source>
        <strain>FVB/N</strain>
        <tissue>Mammary gland</tissue>
        <tissue>Salivary gland</tissue>
    </source>
</reference>